<evidence type="ECO:0000305" key="1"/>
<sequence length="348" mass="37173">MKKSLIALTLAALPVAAMADVTLYGAIKAGVQTYRSVEHTDGKVSKVETGSEIADFGSKIGFKGQEDLGNGLKAVWQLEQGASVAGTNTGWGNKQSFVGLKGGFGTIRAGSLNSPLKNTGANVNAWESGKFTGNVLEISGMAQREHRYLSVRYDSPEFAGFSGSVQYAPKDNSGSNGESYHVGLNYQNSGFFAQYAGLFQRYGEGTKKIEYDDQTYSIPSLFVEKLQVHRLVGGYDNNALYVSVAAQQQDAKLYGAMSGNSHNSQTEVAATAAYRFGNVTPRVSYAHGFKGTVDSANHDNTYDQVVVGAEYDFSKRTSALVSAGWLQGGKGADKIVSTASAVVLRHKF</sequence>
<organism>
    <name type="scientific">Neisseria gonorrhoeae</name>
    <dbReference type="NCBI Taxonomy" id="485"/>
    <lineage>
        <taxon>Bacteria</taxon>
        <taxon>Pseudomonadati</taxon>
        <taxon>Pseudomonadota</taxon>
        <taxon>Betaproteobacteria</taxon>
        <taxon>Neisseriales</taxon>
        <taxon>Neisseriaceae</taxon>
        <taxon>Neisseria</taxon>
    </lineage>
</organism>
<reference key="1">
    <citation type="journal article" date="1987" name="Proc. Natl. Acad. Sci. U.S.A.">
        <title>Porin protein of Neisseria gonorrhoeae: cloning and gene structure.</title>
        <authorList>
            <person name="Gotschlich E.C."/>
            <person name="Seiff M.E."/>
            <person name="Blake M.S."/>
            <person name="Koomey M."/>
        </authorList>
    </citation>
    <scope>NUCLEOTIDE SEQUENCE [GENOMIC DNA]</scope>
    <source>
        <strain>R10</strain>
    </source>
</reference>
<protein>
    <recommendedName>
        <fullName>Major outer membrane protein P.IB</fullName>
        <shortName>PIB</shortName>
        <shortName>Protein IB</shortName>
    </recommendedName>
    <alternativeName>
        <fullName>Porin</fullName>
    </alternativeName>
</protein>
<keyword id="KW-0998">Cell outer membrane</keyword>
<keyword id="KW-0406">Ion transport</keyword>
<keyword id="KW-0472">Membrane</keyword>
<keyword id="KW-0626">Porin</keyword>
<keyword id="KW-0732">Signal</keyword>
<keyword id="KW-0812">Transmembrane</keyword>
<keyword id="KW-1134">Transmembrane beta strand</keyword>
<keyword id="KW-0813">Transport</keyword>
<proteinExistence type="inferred from homology"/>
<dbReference type="EMBL" id="J03017">
    <property type="protein sequence ID" value="AAA25500.1"/>
    <property type="molecule type" value="Genomic_DNA"/>
</dbReference>
<dbReference type="PIR" id="A39920">
    <property type="entry name" value="A39920"/>
</dbReference>
<dbReference type="SMR" id="P20148"/>
<dbReference type="GO" id="GO:0009279">
    <property type="term" value="C:cell outer membrane"/>
    <property type="evidence" value="ECO:0007669"/>
    <property type="project" value="UniProtKB-SubCell"/>
</dbReference>
<dbReference type="GO" id="GO:0046930">
    <property type="term" value="C:pore complex"/>
    <property type="evidence" value="ECO:0007669"/>
    <property type="project" value="UniProtKB-KW"/>
</dbReference>
<dbReference type="GO" id="GO:0015288">
    <property type="term" value="F:porin activity"/>
    <property type="evidence" value="ECO:0007669"/>
    <property type="project" value="UniProtKB-KW"/>
</dbReference>
<dbReference type="GO" id="GO:0034220">
    <property type="term" value="P:monoatomic ion transmembrane transport"/>
    <property type="evidence" value="ECO:0007669"/>
    <property type="project" value="InterPro"/>
</dbReference>
<dbReference type="CDD" id="cd00342">
    <property type="entry name" value="gram_neg_porins"/>
    <property type="match status" value="1"/>
</dbReference>
<dbReference type="FunFam" id="2.40.160.10:FF:000023">
    <property type="entry name" value="Outer membrane protein II"/>
    <property type="match status" value="1"/>
</dbReference>
<dbReference type="Gene3D" id="2.40.160.10">
    <property type="entry name" value="Porin"/>
    <property type="match status" value="1"/>
</dbReference>
<dbReference type="InterPro" id="IPR050298">
    <property type="entry name" value="Gram-neg_bact_OMP"/>
</dbReference>
<dbReference type="InterPro" id="IPR033900">
    <property type="entry name" value="Gram_neg_porin_domain"/>
</dbReference>
<dbReference type="InterPro" id="IPR023614">
    <property type="entry name" value="Porin_dom_sf"/>
</dbReference>
<dbReference type="InterPro" id="IPR001702">
    <property type="entry name" value="Porin_Gram-ve"/>
</dbReference>
<dbReference type="InterPro" id="IPR013793">
    <property type="entry name" value="Porin_Gram-ve_CS"/>
</dbReference>
<dbReference type="InterPro" id="IPR002299">
    <property type="entry name" value="Porin_Neis"/>
</dbReference>
<dbReference type="NCBIfam" id="NF040479">
    <property type="entry name" value="porin_porB_Neis"/>
    <property type="match status" value="1"/>
</dbReference>
<dbReference type="PANTHER" id="PTHR34501:SF9">
    <property type="entry name" value="MAJOR OUTER MEMBRANE PROTEIN P.IA"/>
    <property type="match status" value="1"/>
</dbReference>
<dbReference type="PANTHER" id="PTHR34501">
    <property type="entry name" value="PROTEIN YDDL-RELATED"/>
    <property type="match status" value="1"/>
</dbReference>
<dbReference type="Pfam" id="PF00267">
    <property type="entry name" value="Porin_1"/>
    <property type="match status" value="1"/>
</dbReference>
<dbReference type="PRINTS" id="PR00182">
    <property type="entry name" value="ECOLNEIPORIN"/>
</dbReference>
<dbReference type="PRINTS" id="PR00184">
    <property type="entry name" value="NEISSPPORIN"/>
</dbReference>
<dbReference type="SUPFAM" id="SSF56935">
    <property type="entry name" value="Porins"/>
    <property type="match status" value="1"/>
</dbReference>
<dbReference type="PROSITE" id="PS00576">
    <property type="entry name" value="GRAM_NEG_PORIN"/>
    <property type="match status" value="1"/>
</dbReference>
<accession>P20148</accession>
<feature type="signal peptide">
    <location>
        <begin position="1"/>
        <end position="19"/>
    </location>
</feature>
<feature type="chain" id="PRO_0000025278" description="Major outer membrane protein P.IB">
    <location>
        <begin position="20"/>
        <end position="348"/>
    </location>
</feature>
<gene>
    <name type="primary">porB</name>
</gene>
<name>OMPB2_NEIGO</name>
<comment type="function">
    <text>Serves as a slightly cation selective porin. Major antigen on the gonococcal cell surface and it may have pathogenic properties in addition to its porin activity.</text>
</comment>
<comment type="subunit">
    <text>Homotrimer.</text>
</comment>
<comment type="subcellular location">
    <subcellularLocation>
        <location>Cell outer membrane</location>
        <topology>Multi-pass membrane protein</topology>
    </subcellularLocation>
</comment>
<comment type="similarity">
    <text evidence="1">Belongs to the Gram-negative porin family.</text>
</comment>